<sequence>AEVYNKDGNKLDIYGKAVGLHYFS</sequence>
<feature type="chain" id="PRO_0000182816" description="Outer membrane protein">
    <location>
        <begin position="1"/>
        <end position="24" status="greater than"/>
    </location>
</feature>
<feature type="non-terminal residue" evidence="3">
    <location>
        <position position="24"/>
    </location>
</feature>
<dbReference type="GO" id="GO:0009279">
    <property type="term" value="C:cell outer membrane"/>
    <property type="evidence" value="ECO:0007669"/>
    <property type="project" value="UniProtKB-SubCell"/>
</dbReference>
<dbReference type="GO" id="GO:0046930">
    <property type="term" value="C:pore complex"/>
    <property type="evidence" value="ECO:0007669"/>
    <property type="project" value="UniProtKB-KW"/>
</dbReference>
<dbReference type="GO" id="GO:0015288">
    <property type="term" value="F:porin activity"/>
    <property type="evidence" value="ECO:0007669"/>
    <property type="project" value="UniProtKB-KW"/>
</dbReference>
<dbReference type="GO" id="GO:0006811">
    <property type="term" value="P:monoatomic ion transport"/>
    <property type="evidence" value="ECO:0007669"/>
    <property type="project" value="UniProtKB-KW"/>
</dbReference>
<dbReference type="Gene3D" id="2.40.160.10">
    <property type="entry name" value="Porin"/>
    <property type="match status" value="1"/>
</dbReference>
<dbReference type="InterPro" id="IPR023614">
    <property type="entry name" value="Porin_dom_sf"/>
</dbReference>
<comment type="function">
    <text evidence="1">Forms pores that allow passive diffusion of small molecules across the outer membrane.</text>
</comment>
<comment type="subunit">
    <text evidence="1">Homotrimer.</text>
</comment>
<comment type="subcellular location">
    <subcellularLocation>
        <location evidence="2">Cell outer membrane</location>
        <topology evidence="2">Multi-pass membrane protein</topology>
    </subcellularLocation>
</comment>
<comment type="similarity">
    <text evidence="3">Belongs to the Gram-negative porin family.</text>
</comment>
<accession>P83079</accession>
<evidence type="ECO:0000250" key="1"/>
<evidence type="ECO:0000269" key="2">
    <source ref="1"/>
</evidence>
<evidence type="ECO:0000305" key="3"/>
<protein>
    <recommendedName>
        <fullName>Outer membrane protein</fullName>
    </recommendedName>
    <alternativeName>
        <fullName>Porin</fullName>
    </alternativeName>
</protein>
<organism evidence="3">
    <name type="scientific">Sodalis glossinidius</name>
    <dbReference type="NCBI Taxonomy" id="63612"/>
    <lineage>
        <taxon>Bacteria</taxon>
        <taxon>Pseudomonadati</taxon>
        <taxon>Pseudomonadota</taxon>
        <taxon>Gammaproteobacteria</taxon>
        <taxon>Enterobacterales</taxon>
        <taxon>Bruguierivoracaceae</taxon>
        <taxon>Sodalis</taxon>
    </lineage>
</organism>
<proteinExistence type="evidence at protein level"/>
<name>OMP_SODGL</name>
<reference evidence="3" key="1">
    <citation type="submission" date="2001-08" db="UniProtKB">
        <authorList>
            <person name="Haines L.R."/>
            <person name="Haddow J.D."/>
            <person name="Aksoy S."/>
            <person name="Gooding R.H."/>
            <person name="Pearson T.W."/>
        </authorList>
    </citation>
    <scope>PROTEIN SEQUENCE</scope>
    <scope>SUBCELLULAR LOCATION</scope>
</reference>
<keyword id="KW-0998">Cell outer membrane</keyword>
<keyword id="KW-0903">Direct protein sequencing</keyword>
<keyword id="KW-0406">Ion transport</keyword>
<keyword id="KW-0472">Membrane</keyword>
<keyword id="KW-0626">Porin</keyword>
<keyword id="KW-0812">Transmembrane</keyword>
<keyword id="KW-1134">Transmembrane beta strand</keyword>
<keyword id="KW-0813">Transport</keyword>